<protein>
    <recommendedName>
        <fullName>Protein adenylyltransferase fic-1</fullName>
        <ecNumber evidence="2">2.7.7.108</ecNumber>
    </recommendedName>
    <alternativeName>
        <fullName evidence="8">De-AMPylase fic-1</fullName>
        <ecNumber evidence="1 3">3.1.4.-</ecNumber>
    </alternativeName>
</protein>
<evidence type="ECO:0000250" key="1">
    <source>
        <dbReference type="UniProtKB" id="A0A061I403"/>
    </source>
</evidence>
<evidence type="ECO:0000250" key="2">
    <source>
        <dbReference type="UniProtKB" id="Q23544"/>
    </source>
</evidence>
<evidence type="ECO:0000250" key="3">
    <source>
        <dbReference type="UniProtKB" id="Q8SWV6"/>
    </source>
</evidence>
<evidence type="ECO:0000250" key="4">
    <source>
        <dbReference type="UniProtKB" id="Q9BVA6"/>
    </source>
</evidence>
<evidence type="ECO:0000255" key="5"/>
<evidence type="ECO:0000255" key="6">
    <source>
        <dbReference type="PROSITE-ProRule" id="PRU00791"/>
    </source>
</evidence>
<evidence type="ECO:0000256" key="7">
    <source>
        <dbReference type="SAM" id="MobiDB-lite"/>
    </source>
</evidence>
<evidence type="ECO:0000305" key="8"/>
<dbReference type="EC" id="2.7.7.108" evidence="2"/>
<dbReference type="EC" id="3.1.4.-" evidence="1 3"/>
<dbReference type="EMBL" id="HE600909">
    <property type="protein sequence ID" value="CAP26391.1"/>
    <property type="molecule type" value="Genomic_DNA"/>
</dbReference>
<dbReference type="SMR" id="A8X181"/>
<dbReference type="FunCoup" id="A8X181">
    <property type="interactions" value="1773"/>
</dbReference>
<dbReference type="STRING" id="6238.A8X181"/>
<dbReference type="EnsemblMetazoa" id="CBG05963.1">
    <property type="protein sequence ID" value="CBG05963.1"/>
    <property type="gene ID" value="WBGene00028317"/>
</dbReference>
<dbReference type="KEGG" id="cbr:CBG_05963"/>
<dbReference type="CTD" id="8575239"/>
<dbReference type="WormBase" id="CBG05963">
    <property type="protein sequence ID" value="CBP01640"/>
    <property type="gene ID" value="WBGene00028317"/>
    <property type="gene designation" value="Cbr-fic-1"/>
</dbReference>
<dbReference type="eggNOG" id="KOG3824">
    <property type="taxonomic scope" value="Eukaryota"/>
</dbReference>
<dbReference type="HOGENOM" id="CLU_040460_0_1_1"/>
<dbReference type="InParanoid" id="A8X181"/>
<dbReference type="OMA" id="QLRCQLW"/>
<dbReference type="Proteomes" id="UP000008549">
    <property type="component" value="Unassembled WGS sequence"/>
</dbReference>
<dbReference type="GO" id="GO:0005789">
    <property type="term" value="C:endoplasmic reticulum membrane"/>
    <property type="evidence" value="ECO:0007669"/>
    <property type="project" value="UniProtKB-SubCell"/>
</dbReference>
<dbReference type="GO" id="GO:0031965">
    <property type="term" value="C:nuclear membrane"/>
    <property type="evidence" value="ECO:0007669"/>
    <property type="project" value="UniProtKB-SubCell"/>
</dbReference>
<dbReference type="GO" id="GO:0070733">
    <property type="term" value="F:AMPylase activity"/>
    <property type="evidence" value="ECO:0000250"/>
    <property type="project" value="UniProtKB"/>
</dbReference>
<dbReference type="GO" id="GO:0005524">
    <property type="term" value="F:ATP binding"/>
    <property type="evidence" value="ECO:0007669"/>
    <property type="project" value="UniProtKB-KW"/>
</dbReference>
<dbReference type="GO" id="GO:0016787">
    <property type="term" value="F:hydrolase activity"/>
    <property type="evidence" value="ECO:0007669"/>
    <property type="project" value="UniProtKB-KW"/>
</dbReference>
<dbReference type="GO" id="GO:0050829">
    <property type="term" value="P:defense response to Gram-negative bacterium"/>
    <property type="evidence" value="ECO:0007669"/>
    <property type="project" value="EnsemblMetazoa"/>
</dbReference>
<dbReference type="FunFam" id="1.10.3290.10:FF:000003">
    <property type="entry name" value="Protein adenylyltransferase fic-1"/>
    <property type="match status" value="1"/>
</dbReference>
<dbReference type="FunFam" id="1.25.40.10:FF:000960">
    <property type="entry name" value="Protein adenylyltransferase fic-1"/>
    <property type="match status" value="1"/>
</dbReference>
<dbReference type="Gene3D" id="1.10.3290.10">
    <property type="entry name" value="Fido-like domain"/>
    <property type="match status" value="1"/>
</dbReference>
<dbReference type="Gene3D" id="1.25.40.10">
    <property type="entry name" value="Tetratricopeptide repeat domain"/>
    <property type="match status" value="1"/>
</dbReference>
<dbReference type="InterPro" id="IPR003812">
    <property type="entry name" value="Fido"/>
</dbReference>
<dbReference type="InterPro" id="IPR036597">
    <property type="entry name" value="Fido-like_dom_sf"/>
</dbReference>
<dbReference type="InterPro" id="IPR040198">
    <property type="entry name" value="Fido_containing"/>
</dbReference>
<dbReference type="InterPro" id="IPR011990">
    <property type="entry name" value="TPR-like_helical_dom_sf"/>
</dbReference>
<dbReference type="InterPro" id="IPR019734">
    <property type="entry name" value="TPR_rpt"/>
</dbReference>
<dbReference type="PANTHER" id="PTHR13504">
    <property type="entry name" value="FIDO DOMAIN-CONTAINING PROTEIN DDB_G0283145"/>
    <property type="match status" value="1"/>
</dbReference>
<dbReference type="PANTHER" id="PTHR13504:SF34">
    <property type="entry name" value="PROTEIN ADENYLYLTRANSFERASE FICD"/>
    <property type="match status" value="1"/>
</dbReference>
<dbReference type="Pfam" id="PF02661">
    <property type="entry name" value="Fic"/>
    <property type="match status" value="1"/>
</dbReference>
<dbReference type="SUPFAM" id="SSF140931">
    <property type="entry name" value="Fic-like"/>
    <property type="match status" value="1"/>
</dbReference>
<dbReference type="SUPFAM" id="SSF48452">
    <property type="entry name" value="TPR-like"/>
    <property type="match status" value="1"/>
</dbReference>
<dbReference type="PROSITE" id="PS51459">
    <property type="entry name" value="FIDO"/>
    <property type="match status" value="1"/>
</dbReference>
<dbReference type="PROSITE" id="PS50005">
    <property type="entry name" value="TPR"/>
    <property type="match status" value="2"/>
</dbReference>
<dbReference type="PROSITE" id="PS50293">
    <property type="entry name" value="TPR_REGION"/>
    <property type="match status" value="1"/>
</dbReference>
<organism>
    <name type="scientific">Caenorhabditis briggsae</name>
    <dbReference type="NCBI Taxonomy" id="6238"/>
    <lineage>
        <taxon>Eukaryota</taxon>
        <taxon>Metazoa</taxon>
        <taxon>Ecdysozoa</taxon>
        <taxon>Nematoda</taxon>
        <taxon>Chromadorea</taxon>
        <taxon>Rhabditida</taxon>
        <taxon>Rhabditina</taxon>
        <taxon>Rhabditomorpha</taxon>
        <taxon>Rhabditoidea</taxon>
        <taxon>Rhabditidae</taxon>
        <taxon>Peloderinae</taxon>
        <taxon>Caenorhabditis</taxon>
    </lineage>
</organism>
<accession>A8X181</accession>
<sequence>MSVRRRTHSDDFSFRLERTRRPSKLDVLRESPTLPVQQGYSLTTVVLVSLVVTLVCQNVAPPAFSYLNQLIKNSPKRKIPGQSNRLNIGFISTNSPEKFAPAVQKPTFLVDPIYDEKWKGVHTAVPVMTTEPEEKRDNNHAKVKEAILAAKAASRSRRDGNLERAVTIMEHAMALAPNNPQILIEMGQIREMHNELVEADQCYVKALAYDPGNSEALVLRARTNPLVSAIDRKMLKTVHDLRNEFAHLQHSTALRRMMRETYFLYVYHTVAIEGNTLSLGQTRAILESGMVIPGKSIREHNEVIGMDAALRFLNCSLLSKEHHEISIDDILEMHRRVLGNADPVEAGKIRTTQVYVGKFTPVAPEYVLEQLADMVDWLNDESTMAMDPIERAAIAHYKLVLVHPFTDGNGRTARLLLNLIMMRSGFPPVILPVETRAEYYASLHVANLGDLRPFVRYVAKHSEASIQRYIGAMKTSSGNVINGEEPNLTAEESKVSEKIETECRAGS</sequence>
<comment type="function">
    <text evidence="1 2 3">Protein that can both mediate the addition of adenosine 5'-monophosphate (AMP) to specific residues of target proteins (AMPylation), and the removal of the same modification from target proteins (de-AMPylation), depending on the context (By similarity). The side chain of Glu-273 determines which of the two opposing activities (AMPylase or de-AMPylase) will take place (By similarity). Adenylyltransferase that mediates the addition of adenosine 5'-monophosphate (AMP) to specific residues of target proteins. In vivo target proteins include the heat-shock 70 family proteins hsp-1 and hsp-3 and the translation elongation factors eef-1A, eef-1G and eef-2. Can AMPylate core histone H3 in vitro (By similarity). Can also act as a phosphodiesterase by mediating removal of ATP (de-AMPylation) from target proteins (By similarity). Decreases susceptibility to P.aeruginosa-mediated killing and might therefore play a role in the innate immune response (By similarity).</text>
</comment>
<comment type="catalytic activity">
    <reaction evidence="4">
        <text>L-tyrosyl-[protein] + ATP = O-(5'-adenylyl)-L-tyrosyl-[protein] + diphosphate</text>
        <dbReference type="Rhea" id="RHEA:54288"/>
        <dbReference type="Rhea" id="RHEA-COMP:10136"/>
        <dbReference type="Rhea" id="RHEA-COMP:13846"/>
        <dbReference type="ChEBI" id="CHEBI:30616"/>
        <dbReference type="ChEBI" id="CHEBI:33019"/>
        <dbReference type="ChEBI" id="CHEBI:46858"/>
        <dbReference type="ChEBI" id="CHEBI:83624"/>
        <dbReference type="EC" id="2.7.7.108"/>
    </reaction>
</comment>
<comment type="catalytic activity">
    <reaction evidence="3">
        <text>L-threonyl-[protein] + ATP = 3-O-(5'-adenylyl)-L-threonyl-[protein] + diphosphate</text>
        <dbReference type="Rhea" id="RHEA:54292"/>
        <dbReference type="Rhea" id="RHEA-COMP:11060"/>
        <dbReference type="Rhea" id="RHEA-COMP:13847"/>
        <dbReference type="ChEBI" id="CHEBI:30013"/>
        <dbReference type="ChEBI" id="CHEBI:30616"/>
        <dbReference type="ChEBI" id="CHEBI:33019"/>
        <dbReference type="ChEBI" id="CHEBI:138113"/>
        <dbReference type="EC" id="2.7.7.108"/>
    </reaction>
</comment>
<comment type="catalytic activity">
    <reaction evidence="3">
        <text>3-O-(5'-adenylyl)-L-threonyl-[protein] + H2O = L-threonyl-[protein] + AMP + H(+)</text>
        <dbReference type="Rhea" id="RHEA:55932"/>
        <dbReference type="Rhea" id="RHEA-COMP:11060"/>
        <dbReference type="Rhea" id="RHEA-COMP:13847"/>
        <dbReference type="ChEBI" id="CHEBI:15377"/>
        <dbReference type="ChEBI" id="CHEBI:15378"/>
        <dbReference type="ChEBI" id="CHEBI:30013"/>
        <dbReference type="ChEBI" id="CHEBI:138113"/>
        <dbReference type="ChEBI" id="CHEBI:456215"/>
    </reaction>
</comment>
<comment type="activity regulation">
    <text evidence="1 4">The side chain of Glu-273 determines which of the two opposing activities (AMPylase or de-AMPylase) will take place. In response to endoplasmic reticulum stress, mediates de-AMPylase activity (By similarity). Adenylyltransferase activity is inhibited by the inhibitory helix present at the N-terminus: Glu-273 binds ATP and competes with ATP-binding at Arg-414, thereby preventing adenylyltransferase activity (By similarity). In unstressed cells, disengagement of Glu-273 promotes adenylyltransferase activity (By similarity). Activation dissociates ATP-binding from Glu-273, allowing ordered binding of the entire ATP moiety with the alpha-phosphate in an orientation that is productive for accepting an incoming target hydroxyl side chain (By similarity).</text>
</comment>
<comment type="subunit">
    <text evidence="2">Forms homodimers; homodimerization might be required for adenylyltransferase activity.</text>
</comment>
<comment type="subcellular location">
    <subcellularLocation>
        <location evidence="2">Endoplasmic reticulum membrane</location>
        <topology evidence="2">Single-pass membrane protein</topology>
    </subcellularLocation>
    <subcellularLocation>
        <location evidence="2">Nucleus membrane</location>
        <topology evidence="2">Single-pass membrane protein</topology>
    </subcellularLocation>
    <text evidence="2">Predominantly localized to the endoplasmic reticulum and to the nucleus.</text>
</comment>
<comment type="domain">
    <text evidence="4">The fido domain mediates the adenylyltransferase activity.</text>
</comment>
<comment type="similarity">
    <text evidence="8">Belongs to the fic family.</text>
</comment>
<name>FICD_CAEBR</name>
<keyword id="KW-0067">ATP-binding</keyword>
<keyword id="KW-0256">Endoplasmic reticulum</keyword>
<keyword id="KW-0378">Hydrolase</keyword>
<keyword id="KW-0472">Membrane</keyword>
<keyword id="KW-0547">Nucleotide-binding</keyword>
<keyword id="KW-0548">Nucleotidyltransferase</keyword>
<keyword id="KW-0539">Nucleus</keyword>
<keyword id="KW-0597">Phosphoprotein</keyword>
<keyword id="KW-1185">Reference proteome</keyword>
<keyword id="KW-0677">Repeat</keyword>
<keyword id="KW-0802">TPR repeat</keyword>
<keyword id="KW-0808">Transferase</keyword>
<keyword id="KW-0812">Transmembrane</keyword>
<keyword id="KW-1133">Transmembrane helix</keyword>
<feature type="chain" id="PRO_0000381778" description="Protein adenylyltransferase fic-1">
    <location>
        <begin position="1"/>
        <end position="507"/>
    </location>
</feature>
<feature type="transmembrane region" description="Helical" evidence="5">
    <location>
        <begin position="40"/>
        <end position="56"/>
    </location>
</feature>
<feature type="repeat" description="TPR 1">
    <location>
        <begin position="146"/>
        <end position="179"/>
    </location>
</feature>
<feature type="repeat" description="TPR 2">
    <location>
        <begin position="180"/>
        <end position="213"/>
    </location>
</feature>
<feature type="domain" description="Fido" evidence="6">
    <location>
        <begin position="325"/>
        <end position="460"/>
    </location>
</feature>
<feature type="region of interest" description="Disordered" evidence="7">
    <location>
        <begin position="482"/>
        <end position="507"/>
    </location>
</feature>
<feature type="short sequence motif" description="Inhibitory (S/T)XXXE(G/N) motif">
    <location>
        <begin position="269"/>
        <end position="274"/>
    </location>
</feature>
<feature type="compositionally biased region" description="Basic and acidic residues" evidence="7">
    <location>
        <begin position="491"/>
        <end position="507"/>
    </location>
</feature>
<feature type="active site" evidence="1">
    <location>
        <position position="403"/>
    </location>
</feature>
<feature type="binding site" evidence="4">
    <location>
        <position position="273"/>
    </location>
    <ligand>
        <name>ATP</name>
        <dbReference type="ChEBI" id="CHEBI:30616"/>
    </ligand>
</feature>
<feature type="binding site" evidence="4">
    <location>
        <begin position="356"/>
        <end position="359"/>
    </location>
    <ligand>
        <name>ATP</name>
        <dbReference type="ChEBI" id="CHEBI:30616"/>
    </ligand>
</feature>
<feature type="binding site" evidence="4">
    <location>
        <begin position="407"/>
        <end position="414"/>
    </location>
    <ligand>
        <name>ATP</name>
        <dbReference type="ChEBI" id="CHEBI:30616"/>
    </ligand>
</feature>
<feature type="binding site" evidence="4">
    <location>
        <begin position="439"/>
        <end position="440"/>
    </location>
    <ligand>
        <name>ATP</name>
        <dbReference type="ChEBI" id="CHEBI:30616"/>
    </ligand>
</feature>
<feature type="binding site" evidence="4">
    <location>
        <position position="447"/>
    </location>
    <ligand>
        <name>ATP</name>
        <dbReference type="ChEBI" id="CHEBI:30616"/>
    </ligand>
</feature>
<feature type="site" description="Important for autoinhibition of adenylyltransferase activity" evidence="4">
    <location>
        <position position="273"/>
    </location>
</feature>
<feature type="modified residue" description="O-AMP-threonine; by autocatalysis" evidence="2">
    <location>
        <position position="351"/>
    </location>
</feature>
<feature type="modified residue" description="O-AMP-threonine; by autocatalysis" evidence="2">
    <location>
        <position position="475"/>
    </location>
</feature>
<proteinExistence type="inferred from homology"/>
<reference key="1">
    <citation type="journal article" date="2003" name="PLoS Biol.">
        <title>The genome sequence of Caenorhabditis briggsae: a platform for comparative genomics.</title>
        <authorList>
            <person name="Stein L.D."/>
            <person name="Bao Z."/>
            <person name="Blasiar D."/>
            <person name="Blumenthal T."/>
            <person name="Brent M.R."/>
            <person name="Chen N."/>
            <person name="Chinwalla A."/>
            <person name="Clarke L."/>
            <person name="Clee C."/>
            <person name="Coghlan A."/>
            <person name="Coulson A."/>
            <person name="D'Eustachio P."/>
            <person name="Fitch D.H.A."/>
            <person name="Fulton L.A."/>
            <person name="Fulton R.E."/>
            <person name="Griffiths-Jones S."/>
            <person name="Harris T.W."/>
            <person name="Hillier L.W."/>
            <person name="Kamath R."/>
            <person name="Kuwabara P.E."/>
            <person name="Mardis E.R."/>
            <person name="Marra M.A."/>
            <person name="Miner T.L."/>
            <person name="Minx P."/>
            <person name="Mullikin J.C."/>
            <person name="Plumb R.W."/>
            <person name="Rogers J."/>
            <person name="Schein J.E."/>
            <person name="Sohrmann M."/>
            <person name="Spieth J."/>
            <person name="Stajich J.E."/>
            <person name="Wei C."/>
            <person name="Willey D."/>
            <person name="Wilson R.K."/>
            <person name="Durbin R.M."/>
            <person name="Waterston R.H."/>
        </authorList>
    </citation>
    <scope>NUCLEOTIDE SEQUENCE [LARGE SCALE GENOMIC DNA]</scope>
    <source>
        <strain>AF16</strain>
    </source>
</reference>
<gene>
    <name type="primary">fic-1</name>
    <name type="ORF">CBG05963</name>
</gene>